<name>XYNA_PHACH</name>
<evidence type="ECO:0000250" key="1"/>
<evidence type="ECO:0000255" key="2"/>
<evidence type="ECO:0000255" key="3">
    <source>
        <dbReference type="PROSITE-ProRule" id="PRU00597"/>
    </source>
</evidence>
<evidence type="ECO:0000255" key="4">
    <source>
        <dbReference type="PROSITE-ProRule" id="PRU01096"/>
    </source>
</evidence>
<evidence type="ECO:0000255" key="5">
    <source>
        <dbReference type="PROSITE-ProRule" id="PRU10061"/>
    </source>
</evidence>
<evidence type="ECO:0000256" key="6">
    <source>
        <dbReference type="SAM" id="MobiDB-lite"/>
    </source>
</evidence>
<evidence type="ECO:0000269" key="7">
    <source>
    </source>
</evidence>
<evidence type="ECO:0000269" key="8">
    <source>
    </source>
</evidence>
<evidence type="ECO:0000269" key="9">
    <source>
    </source>
</evidence>
<evidence type="ECO:0000305" key="10"/>
<reference key="1">
    <citation type="submission" date="2000-08" db="EMBL/GenBank/DDBJ databases">
        <title>Molecular characterization and expression analysis of two endo-1,4-B-xylanase genes from Phanerochaete chrysosporium.</title>
        <authorList>
            <person name="Khan S.N."/>
            <person name="Loera-Corral O."/>
            <person name="Aspinall T.V."/>
            <person name="Sims P.F.G."/>
        </authorList>
    </citation>
    <scope>NUCLEOTIDE SEQUENCE [GENOMIC DNA]</scope>
    <source>
        <strain>ATCC 34541 / NBRC 31249 / ME-446 / PRL 2750</strain>
    </source>
</reference>
<reference key="2">
    <citation type="journal article" date="2004" name="Curr. Genet.">
        <title>Cloning, functional expression and characterization of three Phanerochaete chrysosporium endo-1,4-beta-xylanases.</title>
        <authorList>
            <person name="Decelle B."/>
            <person name="Tsang A."/>
            <person name="Storms R.K."/>
        </authorList>
    </citation>
    <scope>NUCLEOTIDE SEQUENCE [GENOMIC DNA]</scope>
    <scope>SUBCELLULAR LOCATION</scope>
    <scope>IDENTIFICATION BY MASS SPECTROMETRY</scope>
    <scope>FUNCTION</scope>
    <scope>CATALYTIC ACTIVITY</scope>
    <scope>BIOPHYSICOCHEMICAL PROPERTIES</scope>
    <source>
        <strain>RP78</strain>
    </source>
</reference>
<reference key="3">
    <citation type="journal article" date="2011" name="Mycobiology">
        <title>Heterologous Expression of Endo-1,4-beta-xylanaseA from Phanerochaete chrysosporium in Pichia pastoris.</title>
        <authorList>
            <person name="Huy N.D."/>
            <person name="Thiyagarajan S."/>
            <person name="Son Y.L."/>
            <person name="Park S.M."/>
        </authorList>
    </citation>
    <scope>NUCLEOTIDE SEQUENCE [MRNA]</scope>
    <scope>CATALYTIC ACTIVITY</scope>
    <scope>BIOPHYSICOCHEMICAL PROPERTIES</scope>
    <source>
        <strain>ATCC 24725 / DSM 6909 / CBS 481.73 / BCRC 36200 / NRRL 6361 / VKM F-1767</strain>
    </source>
</reference>
<reference key="4">
    <citation type="journal article" date="1992" name="Appl. Environ. Microbiol.">
        <title>Xylanase Activity of Phanerochaete chrysosporium.</title>
        <authorList>
            <person name="Dobozi M.S."/>
            <person name="Szakacs G."/>
            <person name="Bruschi C.V."/>
        </authorList>
    </citation>
    <scope>FUNCTION</scope>
    <scope>CATALYTIC ACTIVITY</scope>
</reference>
<feature type="signal peptide" evidence="2">
    <location>
        <begin position="1"/>
        <end position="19"/>
    </location>
</feature>
<feature type="chain" id="PRO_5000419219" description="Endo-1,4-beta-xylanase A">
    <location>
        <begin position="20"/>
        <end position="408"/>
    </location>
</feature>
<feature type="domain" description="CBM1" evidence="3">
    <location>
        <begin position="20"/>
        <end position="55"/>
    </location>
</feature>
<feature type="domain" description="GH10" evidence="4">
    <location>
        <begin position="88"/>
        <end position="405"/>
    </location>
</feature>
<feature type="region of interest" description="Disordered" evidence="6">
    <location>
        <begin position="64"/>
        <end position="89"/>
    </location>
</feature>
<feature type="compositionally biased region" description="Low complexity" evidence="6">
    <location>
        <begin position="76"/>
        <end position="89"/>
    </location>
</feature>
<feature type="active site" description="Proton donor" evidence="1">
    <location>
        <position position="222"/>
    </location>
</feature>
<feature type="active site" description="Nucleophile" evidence="5">
    <location>
        <position position="327"/>
    </location>
</feature>
<feature type="disulfide bond" evidence="1">
    <location>
        <begin position="355"/>
        <end position="361"/>
    </location>
</feature>
<dbReference type="EC" id="3.2.1.8"/>
<dbReference type="EMBL" id="AF301903">
    <property type="protein sequence ID" value="AAG44993.1"/>
    <property type="molecule type" value="Genomic_DNA"/>
</dbReference>
<dbReference type="EMBL" id="EU302792">
    <property type="protein sequence ID" value="ABZ88797.1"/>
    <property type="molecule type" value="Genomic_DNA"/>
</dbReference>
<dbReference type="EMBL" id="HQ993045">
    <property type="protein sequence ID" value="AEK97220.1"/>
    <property type="molecule type" value="mRNA"/>
</dbReference>
<dbReference type="SMR" id="Q9HEZ1"/>
<dbReference type="CAZy" id="CBM1">
    <property type="family name" value="Carbohydrate-Binding Module Family 1"/>
</dbReference>
<dbReference type="CAZy" id="GH10">
    <property type="family name" value="Glycoside Hydrolase Family 10"/>
</dbReference>
<dbReference type="VEuPathDB" id="FungiDB:AGR57_4281"/>
<dbReference type="OMA" id="CVGFTIW"/>
<dbReference type="UniPathway" id="UPA00114"/>
<dbReference type="GO" id="GO:0005576">
    <property type="term" value="C:extracellular region"/>
    <property type="evidence" value="ECO:0007669"/>
    <property type="project" value="UniProtKB-SubCell"/>
</dbReference>
<dbReference type="GO" id="GO:0030248">
    <property type="term" value="F:cellulose binding"/>
    <property type="evidence" value="ECO:0007669"/>
    <property type="project" value="InterPro"/>
</dbReference>
<dbReference type="GO" id="GO:0031176">
    <property type="term" value="F:endo-1,4-beta-xylanase activity"/>
    <property type="evidence" value="ECO:0007669"/>
    <property type="project" value="UniProtKB-EC"/>
</dbReference>
<dbReference type="GO" id="GO:0045493">
    <property type="term" value="P:xylan catabolic process"/>
    <property type="evidence" value="ECO:0007669"/>
    <property type="project" value="UniProtKB-UniPathway"/>
</dbReference>
<dbReference type="Gene3D" id="3.20.20.80">
    <property type="entry name" value="Glycosidases"/>
    <property type="match status" value="1"/>
</dbReference>
<dbReference type="InterPro" id="IPR035971">
    <property type="entry name" value="CBD_sf"/>
</dbReference>
<dbReference type="InterPro" id="IPR000254">
    <property type="entry name" value="Cellulose-bd_dom_fun"/>
</dbReference>
<dbReference type="InterPro" id="IPR044846">
    <property type="entry name" value="GH10"/>
</dbReference>
<dbReference type="InterPro" id="IPR031158">
    <property type="entry name" value="GH10_AS"/>
</dbReference>
<dbReference type="InterPro" id="IPR001000">
    <property type="entry name" value="GH10_dom"/>
</dbReference>
<dbReference type="InterPro" id="IPR017853">
    <property type="entry name" value="Glycoside_hydrolase_SF"/>
</dbReference>
<dbReference type="PANTHER" id="PTHR31490:SF35">
    <property type="entry name" value="ENDO-1,4-BETA-XYLANASE"/>
    <property type="match status" value="1"/>
</dbReference>
<dbReference type="PANTHER" id="PTHR31490">
    <property type="entry name" value="GLYCOSYL HYDROLASE"/>
    <property type="match status" value="1"/>
</dbReference>
<dbReference type="Pfam" id="PF00734">
    <property type="entry name" value="CBM_1"/>
    <property type="match status" value="1"/>
</dbReference>
<dbReference type="Pfam" id="PF00331">
    <property type="entry name" value="Glyco_hydro_10"/>
    <property type="match status" value="1"/>
</dbReference>
<dbReference type="PRINTS" id="PR00134">
    <property type="entry name" value="GLHYDRLASE10"/>
</dbReference>
<dbReference type="SMART" id="SM00236">
    <property type="entry name" value="fCBD"/>
    <property type="match status" value="1"/>
</dbReference>
<dbReference type="SMART" id="SM00633">
    <property type="entry name" value="Glyco_10"/>
    <property type="match status" value="1"/>
</dbReference>
<dbReference type="SUPFAM" id="SSF51445">
    <property type="entry name" value="(Trans)glycosidases"/>
    <property type="match status" value="1"/>
</dbReference>
<dbReference type="SUPFAM" id="SSF57180">
    <property type="entry name" value="Cellulose-binding domain"/>
    <property type="match status" value="1"/>
</dbReference>
<dbReference type="PROSITE" id="PS00562">
    <property type="entry name" value="CBM1_1"/>
    <property type="match status" value="1"/>
</dbReference>
<dbReference type="PROSITE" id="PS51164">
    <property type="entry name" value="CBM1_2"/>
    <property type="match status" value="1"/>
</dbReference>
<dbReference type="PROSITE" id="PS00591">
    <property type="entry name" value="GH10_1"/>
    <property type="match status" value="1"/>
</dbReference>
<dbReference type="PROSITE" id="PS51760">
    <property type="entry name" value="GH10_2"/>
    <property type="match status" value="1"/>
</dbReference>
<accession>Q9HEZ1</accession>
<proteinExistence type="evidence at protein level"/>
<keyword id="KW-0119">Carbohydrate metabolism</keyword>
<keyword id="KW-1015">Disulfide bond</keyword>
<keyword id="KW-0326">Glycosidase</keyword>
<keyword id="KW-0378">Hydrolase</keyword>
<keyword id="KW-0624">Polysaccharide degradation</keyword>
<keyword id="KW-0964">Secreted</keyword>
<keyword id="KW-0732">Signal</keyword>
<keyword id="KW-0858">Xylan degradation</keyword>
<gene>
    <name type="primary">xynA</name>
</gene>
<comment type="function">
    <text evidence="7 8">Endo-1,4-beta-xylanase involved in the hydrolysis of xylan, a major structural heterogeneous polysaccharide found in plant biomass representing the second most abundant polysaccharide in the biosphere, after cellulose.</text>
</comment>
<comment type="catalytic activity">
    <reaction evidence="7 8 9">
        <text>Endohydrolysis of (1-&gt;4)-beta-D-xylosidic linkages in xylans.</text>
        <dbReference type="EC" id="3.2.1.8"/>
    </reaction>
</comment>
<comment type="biophysicochemical properties">
    <kinetics>
        <KM evidence="7 9">3.2 mg/ml for birchwood xylan</KM>
    </kinetics>
    <phDependence>
        <text evidence="7 9">Optimum pH is 4.5.</text>
    </phDependence>
    <temperatureDependence>
        <text evidence="7 9">Optimum temperature is 70 degrees Celsius.</text>
    </temperatureDependence>
</comment>
<comment type="pathway">
    <text>Glycan degradation; xylan degradation.</text>
</comment>
<comment type="subcellular location">
    <subcellularLocation>
        <location evidence="7">Secreted</location>
    </subcellularLocation>
</comment>
<comment type="similarity">
    <text evidence="10">Belongs to the glycosyl hydrolase 10 (cellulase F) family.</text>
</comment>
<organism>
    <name type="scientific">Phanerodontia chrysosporium</name>
    <name type="common">White-rot fungus</name>
    <name type="synonym">Sporotrichum pruinosum</name>
    <dbReference type="NCBI Taxonomy" id="2822231"/>
    <lineage>
        <taxon>Eukaryota</taxon>
        <taxon>Fungi</taxon>
        <taxon>Dikarya</taxon>
        <taxon>Basidiomycota</taxon>
        <taxon>Agaricomycotina</taxon>
        <taxon>Agaricomycetes</taxon>
        <taxon>Polyporales</taxon>
        <taxon>Phanerochaetaceae</taxon>
        <taxon>Phanerodontia</taxon>
    </lineage>
</organism>
<sequence length="408" mass="43571">MKLSASFAALALLLPFVQAQSPVWGQCGGIGWTGPTTCTAGNVCQEYSAYYSQCIPASQATSVTSVSTAPNPPPTSHTSTSSAPSGASTSTAKLNTLAKAKGKLYFGTATDNGELSDTAYTAILDDNTMFGQITPANSMKWDATEPQQGQFTFSGGDQIANLAKSNGMLLRGHNCVWYNQLPSWVSNGKFTAAQLTSIIQNHCSTLVTHYKGQVYAWDVVNEPFNDDGSWRTDVFYNTLGTSYVQIALEAARAADPDAKLYINEYNIEYAGAKATSLLNLVKTLKAASVPLDGIGFQSHFIVGQVPTGLQSQLTTFAAQGVEVAITELDIRMTLPSTPALLAQQKTDYSNVIKACASVEACVGVTVWDWTDKYSWVPNTFSGQGAACPWDQNFVRKPAYDGIAIGFGN</sequence>
<protein>
    <recommendedName>
        <fullName>Endo-1,4-beta-xylanase A</fullName>
        <shortName>Xylanase A</shortName>
        <ecNumber>3.2.1.8</ecNumber>
    </recommendedName>
    <alternativeName>
        <fullName>1,4-beta-D-xylan xylanohydrolase A</fullName>
    </alternativeName>
</protein>